<gene>
    <name type="ordered locus">NFA_36430</name>
</gene>
<name>YQGF_NOCFA</name>
<proteinExistence type="inferred from homology"/>
<accession>Q5YTK0</accession>
<comment type="function">
    <text evidence="1">Could be a nuclease involved in processing of the 5'-end of pre-16S rRNA.</text>
</comment>
<comment type="subcellular location">
    <subcellularLocation>
        <location evidence="1">Cytoplasm</location>
    </subcellularLocation>
</comment>
<comment type="similarity">
    <text evidence="1">Belongs to the YqgF nuclease family.</text>
</comment>
<sequence>MDAQERSERPDPATDPGRGRRLGIDVGSVRIGVASSDPDGILATPVETVPRAKKVPRGTVSPDIARIAEIVREYEAVEVIVGLPRTLRGEKGSAATAAIAFAERLRREIPDVAIRLSDERLTTVSAARALRDSGVRARGQRQVIDQAAAVSILQGWLDERSAVMRSVGEAESATSSGDDA</sequence>
<organism>
    <name type="scientific">Nocardia farcinica (strain IFM 10152)</name>
    <dbReference type="NCBI Taxonomy" id="247156"/>
    <lineage>
        <taxon>Bacteria</taxon>
        <taxon>Bacillati</taxon>
        <taxon>Actinomycetota</taxon>
        <taxon>Actinomycetes</taxon>
        <taxon>Mycobacteriales</taxon>
        <taxon>Nocardiaceae</taxon>
        <taxon>Nocardia</taxon>
    </lineage>
</organism>
<feature type="chain" id="PRO_0000172106" description="Putative pre-16S rRNA nuclease">
    <location>
        <begin position="1"/>
        <end position="180"/>
    </location>
</feature>
<feature type="region of interest" description="Disordered" evidence="2">
    <location>
        <begin position="1"/>
        <end position="23"/>
    </location>
</feature>
<feature type="compositionally biased region" description="Basic and acidic residues" evidence="2">
    <location>
        <begin position="1"/>
        <end position="12"/>
    </location>
</feature>
<protein>
    <recommendedName>
        <fullName evidence="1">Putative pre-16S rRNA nuclease</fullName>
        <ecNumber evidence="1">3.1.-.-</ecNumber>
    </recommendedName>
</protein>
<keyword id="KW-0963">Cytoplasm</keyword>
<keyword id="KW-0378">Hydrolase</keyword>
<keyword id="KW-0540">Nuclease</keyword>
<keyword id="KW-1185">Reference proteome</keyword>
<keyword id="KW-0690">Ribosome biogenesis</keyword>
<evidence type="ECO:0000255" key="1">
    <source>
        <dbReference type="HAMAP-Rule" id="MF_00651"/>
    </source>
</evidence>
<evidence type="ECO:0000256" key="2">
    <source>
        <dbReference type="SAM" id="MobiDB-lite"/>
    </source>
</evidence>
<dbReference type="EC" id="3.1.-.-" evidence="1"/>
<dbReference type="EMBL" id="AP006618">
    <property type="protein sequence ID" value="BAD58491.1"/>
    <property type="molecule type" value="Genomic_DNA"/>
</dbReference>
<dbReference type="RefSeq" id="WP_011210176.1">
    <property type="nucleotide sequence ID" value="NC_006361.1"/>
</dbReference>
<dbReference type="SMR" id="Q5YTK0"/>
<dbReference type="STRING" id="247156.NFA_36430"/>
<dbReference type="GeneID" id="61134338"/>
<dbReference type="KEGG" id="nfa:NFA_36430"/>
<dbReference type="eggNOG" id="COG0816">
    <property type="taxonomic scope" value="Bacteria"/>
</dbReference>
<dbReference type="HOGENOM" id="CLU_098240_0_0_11"/>
<dbReference type="OrthoDB" id="9790539at2"/>
<dbReference type="Proteomes" id="UP000006820">
    <property type="component" value="Chromosome"/>
</dbReference>
<dbReference type="GO" id="GO:0005829">
    <property type="term" value="C:cytosol"/>
    <property type="evidence" value="ECO:0007669"/>
    <property type="project" value="TreeGrafter"/>
</dbReference>
<dbReference type="GO" id="GO:0004518">
    <property type="term" value="F:nuclease activity"/>
    <property type="evidence" value="ECO:0007669"/>
    <property type="project" value="UniProtKB-KW"/>
</dbReference>
<dbReference type="GO" id="GO:0000967">
    <property type="term" value="P:rRNA 5'-end processing"/>
    <property type="evidence" value="ECO:0007669"/>
    <property type="project" value="UniProtKB-UniRule"/>
</dbReference>
<dbReference type="CDD" id="cd16964">
    <property type="entry name" value="YqgF"/>
    <property type="match status" value="1"/>
</dbReference>
<dbReference type="Gene3D" id="3.30.420.140">
    <property type="entry name" value="YqgF/RNase H-like domain"/>
    <property type="match status" value="1"/>
</dbReference>
<dbReference type="HAMAP" id="MF_00651">
    <property type="entry name" value="Nuclease_YqgF"/>
    <property type="match status" value="1"/>
</dbReference>
<dbReference type="InterPro" id="IPR012337">
    <property type="entry name" value="RNaseH-like_sf"/>
</dbReference>
<dbReference type="InterPro" id="IPR005227">
    <property type="entry name" value="YqgF"/>
</dbReference>
<dbReference type="InterPro" id="IPR006641">
    <property type="entry name" value="YqgF/RNaseH-like_dom"/>
</dbReference>
<dbReference type="InterPro" id="IPR037027">
    <property type="entry name" value="YqgF/RNaseH-like_dom_sf"/>
</dbReference>
<dbReference type="NCBIfam" id="TIGR00250">
    <property type="entry name" value="RNAse_H_YqgF"/>
    <property type="match status" value="1"/>
</dbReference>
<dbReference type="PANTHER" id="PTHR33317">
    <property type="entry name" value="POLYNUCLEOTIDYL TRANSFERASE, RIBONUCLEASE H-LIKE SUPERFAMILY PROTEIN"/>
    <property type="match status" value="1"/>
</dbReference>
<dbReference type="PANTHER" id="PTHR33317:SF4">
    <property type="entry name" value="POLYNUCLEOTIDYL TRANSFERASE, RIBONUCLEASE H-LIKE SUPERFAMILY PROTEIN"/>
    <property type="match status" value="1"/>
</dbReference>
<dbReference type="Pfam" id="PF03652">
    <property type="entry name" value="RuvX"/>
    <property type="match status" value="1"/>
</dbReference>
<dbReference type="SMART" id="SM00732">
    <property type="entry name" value="YqgFc"/>
    <property type="match status" value="1"/>
</dbReference>
<dbReference type="SUPFAM" id="SSF53098">
    <property type="entry name" value="Ribonuclease H-like"/>
    <property type="match status" value="1"/>
</dbReference>
<reference key="1">
    <citation type="journal article" date="2004" name="Proc. Natl. Acad. Sci. U.S.A.">
        <title>The complete genomic sequence of Nocardia farcinica IFM 10152.</title>
        <authorList>
            <person name="Ishikawa J."/>
            <person name="Yamashita A."/>
            <person name="Mikami Y."/>
            <person name="Hoshino Y."/>
            <person name="Kurita H."/>
            <person name="Hotta K."/>
            <person name="Shiba T."/>
            <person name="Hattori M."/>
        </authorList>
    </citation>
    <scope>NUCLEOTIDE SEQUENCE [LARGE SCALE GENOMIC DNA]</scope>
    <source>
        <strain>IFM 10152</strain>
    </source>
</reference>